<organism>
    <name type="scientific">Listeria monocytogenes serotype 4b (strain F2365)</name>
    <dbReference type="NCBI Taxonomy" id="265669"/>
    <lineage>
        <taxon>Bacteria</taxon>
        <taxon>Bacillati</taxon>
        <taxon>Bacillota</taxon>
        <taxon>Bacilli</taxon>
        <taxon>Bacillales</taxon>
        <taxon>Listeriaceae</taxon>
        <taxon>Listeria</taxon>
    </lineage>
</organism>
<sequence>MTKSVTVKDLKERLNLELICSETGLERPISTSDLSRPGLELTGFFSYYPEDRVQLFGMTEISFSEGMEPEERLKRYKQMCTKRTPAFVISRNLEVPKELVAAAKEADIPVLRSRLKTTRLSVYITNYLESRLAPVISMHGVLVDIYGLGVLITGSSGVGKSETALELVKRGHRLVADDNVEIRQEDEMTLIGSSPAIIEHLLEIRGLGIINVMTLFGAGAVRSSKKITIVVHLENWDPDKHYDRVGLDQEKTKIFDMDIPKITVPVRPGRNLSVIIEVAAMNFRLKNMGYNAAEQFTQDLNNLIGHNSSMND</sequence>
<protein>
    <recommendedName>
        <fullName evidence="1">HPr kinase/phosphorylase</fullName>
        <shortName evidence="1">HPrK/P</shortName>
        <ecNumber evidence="1">2.7.11.-</ecNumber>
        <ecNumber evidence="1">2.7.4.-</ecNumber>
    </recommendedName>
    <alternativeName>
        <fullName evidence="1">HPr(Ser) kinase/phosphorylase</fullName>
    </alternativeName>
</protein>
<reference key="1">
    <citation type="journal article" date="2004" name="Nucleic Acids Res.">
        <title>Whole genome comparisons of serotype 4b and 1/2a strains of the food-borne pathogen Listeria monocytogenes reveal new insights into the core genome components of this species.</title>
        <authorList>
            <person name="Nelson K.E."/>
            <person name="Fouts D.E."/>
            <person name="Mongodin E.F."/>
            <person name="Ravel J."/>
            <person name="DeBoy R.T."/>
            <person name="Kolonay J.F."/>
            <person name="Rasko D.A."/>
            <person name="Angiuoli S.V."/>
            <person name="Gill S.R."/>
            <person name="Paulsen I.T."/>
            <person name="Peterson J.D."/>
            <person name="White O."/>
            <person name="Nelson W.C."/>
            <person name="Nierman W.C."/>
            <person name="Beanan M.J."/>
            <person name="Brinkac L.M."/>
            <person name="Daugherty S.C."/>
            <person name="Dodson R.J."/>
            <person name="Durkin A.S."/>
            <person name="Madupu R."/>
            <person name="Haft D.H."/>
            <person name="Selengut J."/>
            <person name="Van Aken S.E."/>
            <person name="Khouri H.M."/>
            <person name="Fedorova N."/>
            <person name="Forberger H.A."/>
            <person name="Tran B."/>
            <person name="Kathariou S."/>
            <person name="Wonderling L.D."/>
            <person name="Uhlich G.A."/>
            <person name="Bayles D.O."/>
            <person name="Luchansky J.B."/>
            <person name="Fraser C.M."/>
        </authorList>
    </citation>
    <scope>NUCLEOTIDE SEQUENCE [LARGE SCALE GENOMIC DNA]</scope>
    <source>
        <strain>F2365</strain>
    </source>
</reference>
<feature type="chain" id="PRO_0000058967" description="HPr kinase/phosphorylase">
    <location>
        <begin position="1"/>
        <end position="312"/>
    </location>
</feature>
<feature type="region of interest" description="Important for the catalytic mechanism of both phosphorylation and dephosphorylation" evidence="1">
    <location>
        <begin position="202"/>
        <end position="211"/>
    </location>
</feature>
<feature type="region of interest" description="Important for the catalytic mechanism of dephosphorylation" evidence="1">
    <location>
        <begin position="265"/>
        <end position="270"/>
    </location>
</feature>
<feature type="active site" evidence="1">
    <location>
        <position position="139"/>
    </location>
</feature>
<feature type="active site" evidence="1">
    <location>
        <position position="160"/>
    </location>
</feature>
<feature type="active site" description="Proton acceptor; for phosphorylation activity. Proton donor; for dephosphorylation activity" evidence="1">
    <location>
        <position position="178"/>
    </location>
</feature>
<feature type="active site" evidence="1">
    <location>
        <position position="244"/>
    </location>
</feature>
<feature type="binding site" evidence="1">
    <location>
        <begin position="154"/>
        <end position="161"/>
    </location>
    <ligand>
        <name>ATP</name>
        <dbReference type="ChEBI" id="CHEBI:30616"/>
    </ligand>
</feature>
<feature type="binding site" evidence="1">
    <location>
        <position position="161"/>
    </location>
    <ligand>
        <name>Mg(2+)</name>
        <dbReference type="ChEBI" id="CHEBI:18420"/>
    </ligand>
</feature>
<feature type="binding site" evidence="1">
    <location>
        <position position="203"/>
    </location>
    <ligand>
        <name>Mg(2+)</name>
        <dbReference type="ChEBI" id="CHEBI:18420"/>
    </ligand>
</feature>
<accession>Q71WU4</accession>
<name>HPRK_LISMF</name>
<keyword id="KW-0067">ATP-binding</keyword>
<keyword id="KW-0119">Carbohydrate metabolism</keyword>
<keyword id="KW-0418">Kinase</keyword>
<keyword id="KW-0460">Magnesium</keyword>
<keyword id="KW-0479">Metal-binding</keyword>
<keyword id="KW-0511">Multifunctional enzyme</keyword>
<keyword id="KW-0547">Nucleotide-binding</keyword>
<keyword id="KW-0723">Serine/threonine-protein kinase</keyword>
<keyword id="KW-0808">Transferase</keyword>
<dbReference type="EC" id="2.7.11.-" evidence="1"/>
<dbReference type="EC" id="2.7.4.-" evidence="1"/>
<dbReference type="EMBL" id="AE017262">
    <property type="protein sequence ID" value="AAT05221.1"/>
    <property type="molecule type" value="Genomic_DNA"/>
</dbReference>
<dbReference type="RefSeq" id="WP_003722615.1">
    <property type="nucleotide sequence ID" value="NC_002973.6"/>
</dbReference>
<dbReference type="SMR" id="Q71WU4"/>
<dbReference type="KEGG" id="lmf:LMOf2365_2456"/>
<dbReference type="HOGENOM" id="CLU_052030_0_1_9"/>
<dbReference type="GO" id="GO:0005524">
    <property type="term" value="F:ATP binding"/>
    <property type="evidence" value="ECO:0007669"/>
    <property type="project" value="UniProtKB-UniRule"/>
</dbReference>
<dbReference type="GO" id="GO:0000287">
    <property type="term" value="F:magnesium ion binding"/>
    <property type="evidence" value="ECO:0007669"/>
    <property type="project" value="UniProtKB-UniRule"/>
</dbReference>
<dbReference type="GO" id="GO:0000155">
    <property type="term" value="F:phosphorelay sensor kinase activity"/>
    <property type="evidence" value="ECO:0007669"/>
    <property type="project" value="InterPro"/>
</dbReference>
<dbReference type="GO" id="GO:0004674">
    <property type="term" value="F:protein serine/threonine kinase activity"/>
    <property type="evidence" value="ECO:0007669"/>
    <property type="project" value="UniProtKB-KW"/>
</dbReference>
<dbReference type="GO" id="GO:0004712">
    <property type="term" value="F:protein serine/threonine/tyrosine kinase activity"/>
    <property type="evidence" value="ECO:0007669"/>
    <property type="project" value="UniProtKB-UniRule"/>
</dbReference>
<dbReference type="GO" id="GO:0006109">
    <property type="term" value="P:regulation of carbohydrate metabolic process"/>
    <property type="evidence" value="ECO:0007669"/>
    <property type="project" value="UniProtKB-UniRule"/>
</dbReference>
<dbReference type="CDD" id="cd01918">
    <property type="entry name" value="HprK_C"/>
    <property type="match status" value="1"/>
</dbReference>
<dbReference type="FunFam" id="3.40.1390.20:FF:000002">
    <property type="entry name" value="HPr kinase/phosphorylase"/>
    <property type="match status" value="1"/>
</dbReference>
<dbReference type="FunFam" id="3.40.50.300:FF:000174">
    <property type="entry name" value="HPr kinase/phosphorylase"/>
    <property type="match status" value="1"/>
</dbReference>
<dbReference type="Gene3D" id="3.40.1390.20">
    <property type="entry name" value="HprK N-terminal domain-like"/>
    <property type="match status" value="1"/>
</dbReference>
<dbReference type="Gene3D" id="3.40.50.300">
    <property type="entry name" value="P-loop containing nucleotide triphosphate hydrolases"/>
    <property type="match status" value="1"/>
</dbReference>
<dbReference type="HAMAP" id="MF_01249">
    <property type="entry name" value="HPr_kinase"/>
    <property type="match status" value="1"/>
</dbReference>
<dbReference type="InterPro" id="IPR003755">
    <property type="entry name" value="HPr(Ser)_kin/Pase"/>
</dbReference>
<dbReference type="InterPro" id="IPR011104">
    <property type="entry name" value="Hpr_kin/Pase_C"/>
</dbReference>
<dbReference type="InterPro" id="IPR011126">
    <property type="entry name" value="Hpr_kin/Pase_Hpr_N"/>
</dbReference>
<dbReference type="InterPro" id="IPR027417">
    <property type="entry name" value="P-loop_NTPase"/>
</dbReference>
<dbReference type="InterPro" id="IPR028979">
    <property type="entry name" value="Ser_kin/Pase_Hpr-like_N_sf"/>
</dbReference>
<dbReference type="NCBIfam" id="TIGR00679">
    <property type="entry name" value="hpr-ser"/>
    <property type="match status" value="1"/>
</dbReference>
<dbReference type="PANTHER" id="PTHR30305:SF1">
    <property type="entry name" value="HPR KINASE_PHOSPHORYLASE"/>
    <property type="match status" value="1"/>
</dbReference>
<dbReference type="PANTHER" id="PTHR30305">
    <property type="entry name" value="PROTEIN YJDM-RELATED"/>
    <property type="match status" value="1"/>
</dbReference>
<dbReference type="Pfam" id="PF07475">
    <property type="entry name" value="Hpr_kinase_C"/>
    <property type="match status" value="1"/>
</dbReference>
<dbReference type="Pfam" id="PF02603">
    <property type="entry name" value="Hpr_kinase_N"/>
    <property type="match status" value="1"/>
</dbReference>
<dbReference type="SUPFAM" id="SSF75138">
    <property type="entry name" value="HprK N-terminal domain-like"/>
    <property type="match status" value="1"/>
</dbReference>
<dbReference type="SUPFAM" id="SSF53795">
    <property type="entry name" value="PEP carboxykinase-like"/>
    <property type="match status" value="1"/>
</dbReference>
<proteinExistence type="inferred from homology"/>
<evidence type="ECO:0000255" key="1">
    <source>
        <dbReference type="HAMAP-Rule" id="MF_01249"/>
    </source>
</evidence>
<comment type="function">
    <text evidence="1">Catalyzes the ATP- as well as the pyrophosphate-dependent phosphorylation of a specific serine residue in HPr, a phosphocarrier protein of the phosphoenolpyruvate-dependent sugar phosphotransferase system (PTS). HprK/P also catalyzes the pyrophosphate-producing, inorganic phosphate-dependent dephosphorylation (phosphorolysis) of seryl-phosphorylated HPr (P-Ser-HPr). The two antagonistic activities of HprK/P are regulated by several intracellular metabolites, which change their concentration in response to the absence or presence of rapidly metabolisable carbon sources (glucose, fructose, etc.) in the growth medium. Therefore, by controlling the phosphorylation state of HPr, HPrK/P is a sensor enzyme that plays a major role in the regulation of carbon metabolism and sugar transport: it mediates carbon catabolite repression (CCR), and regulates PTS-catalyzed carbohydrate uptake and inducer exclusion.</text>
</comment>
<comment type="catalytic activity">
    <reaction evidence="1">
        <text>[HPr protein]-L-serine + ATP = [HPr protein]-O-phospho-L-serine + ADP + H(+)</text>
        <dbReference type="Rhea" id="RHEA:46600"/>
        <dbReference type="Rhea" id="RHEA-COMP:11602"/>
        <dbReference type="Rhea" id="RHEA-COMP:11603"/>
        <dbReference type="ChEBI" id="CHEBI:15378"/>
        <dbReference type="ChEBI" id="CHEBI:29999"/>
        <dbReference type="ChEBI" id="CHEBI:30616"/>
        <dbReference type="ChEBI" id="CHEBI:83421"/>
        <dbReference type="ChEBI" id="CHEBI:456216"/>
    </reaction>
</comment>
<comment type="catalytic activity">
    <reaction evidence="1">
        <text>[HPr protein]-O-phospho-L-serine + phosphate + H(+) = [HPr protein]-L-serine + diphosphate</text>
        <dbReference type="Rhea" id="RHEA:46604"/>
        <dbReference type="Rhea" id="RHEA-COMP:11602"/>
        <dbReference type="Rhea" id="RHEA-COMP:11603"/>
        <dbReference type="ChEBI" id="CHEBI:15378"/>
        <dbReference type="ChEBI" id="CHEBI:29999"/>
        <dbReference type="ChEBI" id="CHEBI:33019"/>
        <dbReference type="ChEBI" id="CHEBI:43474"/>
        <dbReference type="ChEBI" id="CHEBI:83421"/>
    </reaction>
</comment>
<comment type="cofactor">
    <cofactor evidence="1">
        <name>Mg(2+)</name>
        <dbReference type="ChEBI" id="CHEBI:18420"/>
    </cofactor>
</comment>
<comment type="subunit">
    <text evidence="1">Homohexamer.</text>
</comment>
<comment type="domain">
    <text evidence="1">The Walker A ATP-binding motif also binds Pi and PPi.</text>
</comment>
<comment type="miscellaneous">
    <text evidence="1">Both phosphorylation and phosphorolysis are carried out by the same active site and suggest a common mechanism for both reactions.</text>
</comment>
<comment type="similarity">
    <text evidence="1">Belongs to the HPrK/P family.</text>
</comment>
<gene>
    <name evidence="1" type="primary">hprK</name>
    <name type="ordered locus">LMOf2365_2456</name>
</gene>